<reference key="1">
    <citation type="submission" date="2007-06" db="EMBL/GenBank/DDBJ databases">
        <title>Complete sequence of Clostridium beijerinckii NCIMB 8052.</title>
        <authorList>
            <consortium name="US DOE Joint Genome Institute"/>
            <person name="Copeland A."/>
            <person name="Lucas S."/>
            <person name="Lapidus A."/>
            <person name="Barry K."/>
            <person name="Detter J.C."/>
            <person name="Glavina del Rio T."/>
            <person name="Hammon N."/>
            <person name="Israni S."/>
            <person name="Dalin E."/>
            <person name="Tice H."/>
            <person name="Pitluck S."/>
            <person name="Sims D."/>
            <person name="Brettin T."/>
            <person name="Bruce D."/>
            <person name="Tapia R."/>
            <person name="Brainard J."/>
            <person name="Schmutz J."/>
            <person name="Larimer F."/>
            <person name="Land M."/>
            <person name="Hauser L."/>
            <person name="Kyrpides N."/>
            <person name="Mikhailova N."/>
            <person name="Bennet G."/>
            <person name="Cann I."/>
            <person name="Chen J.-S."/>
            <person name="Contreras A.L."/>
            <person name="Jones D."/>
            <person name="Kashket E."/>
            <person name="Mitchell W."/>
            <person name="Stoddard S."/>
            <person name="Schwarz W."/>
            <person name="Qureshi N."/>
            <person name="Young M."/>
            <person name="Shi Z."/>
            <person name="Ezeji T."/>
            <person name="White B."/>
            <person name="Blaschek H."/>
            <person name="Richardson P."/>
        </authorList>
    </citation>
    <scope>NUCLEOTIDE SEQUENCE [LARGE SCALE GENOMIC DNA]</scope>
    <source>
        <strain>ATCC 51743 / NCIMB 8052</strain>
    </source>
</reference>
<keyword id="KW-0963">Cytoplasm</keyword>
<keyword id="KW-0378">Hydrolase</keyword>
<keyword id="KW-0540">Nuclease</keyword>
<keyword id="KW-0690">Ribosome biogenesis</keyword>
<name>YQGF_CLOB8</name>
<comment type="function">
    <text evidence="1">Could be a nuclease involved in processing of the 5'-end of pre-16S rRNA.</text>
</comment>
<comment type="subcellular location">
    <subcellularLocation>
        <location evidence="1">Cytoplasm</location>
    </subcellularLocation>
</comment>
<comment type="similarity">
    <text evidence="1">Belongs to the YqgF nuclease family.</text>
</comment>
<proteinExistence type="inferred from homology"/>
<accession>A6LSF8</accession>
<dbReference type="EC" id="3.1.-.-" evidence="1"/>
<dbReference type="EMBL" id="CP000721">
    <property type="protein sequence ID" value="ABR33288.1"/>
    <property type="molecule type" value="Genomic_DNA"/>
</dbReference>
<dbReference type="SMR" id="A6LSF8"/>
<dbReference type="KEGG" id="cbe:Cbei_1106"/>
<dbReference type="eggNOG" id="COG0816">
    <property type="taxonomic scope" value="Bacteria"/>
</dbReference>
<dbReference type="HOGENOM" id="CLU_098240_2_0_9"/>
<dbReference type="Proteomes" id="UP000000565">
    <property type="component" value="Chromosome"/>
</dbReference>
<dbReference type="GO" id="GO:0005829">
    <property type="term" value="C:cytosol"/>
    <property type="evidence" value="ECO:0007669"/>
    <property type="project" value="TreeGrafter"/>
</dbReference>
<dbReference type="GO" id="GO:0004518">
    <property type="term" value="F:nuclease activity"/>
    <property type="evidence" value="ECO:0007669"/>
    <property type="project" value="UniProtKB-KW"/>
</dbReference>
<dbReference type="GO" id="GO:0000967">
    <property type="term" value="P:rRNA 5'-end processing"/>
    <property type="evidence" value="ECO:0007669"/>
    <property type="project" value="UniProtKB-UniRule"/>
</dbReference>
<dbReference type="CDD" id="cd16964">
    <property type="entry name" value="YqgF"/>
    <property type="match status" value="1"/>
</dbReference>
<dbReference type="Gene3D" id="3.30.420.140">
    <property type="entry name" value="YqgF/RNase H-like domain"/>
    <property type="match status" value="1"/>
</dbReference>
<dbReference type="HAMAP" id="MF_00651">
    <property type="entry name" value="Nuclease_YqgF"/>
    <property type="match status" value="1"/>
</dbReference>
<dbReference type="InterPro" id="IPR012337">
    <property type="entry name" value="RNaseH-like_sf"/>
</dbReference>
<dbReference type="InterPro" id="IPR005227">
    <property type="entry name" value="YqgF"/>
</dbReference>
<dbReference type="InterPro" id="IPR006641">
    <property type="entry name" value="YqgF/RNaseH-like_dom"/>
</dbReference>
<dbReference type="InterPro" id="IPR037027">
    <property type="entry name" value="YqgF/RNaseH-like_dom_sf"/>
</dbReference>
<dbReference type="NCBIfam" id="TIGR00250">
    <property type="entry name" value="RNAse_H_YqgF"/>
    <property type="match status" value="1"/>
</dbReference>
<dbReference type="PANTHER" id="PTHR33317">
    <property type="entry name" value="POLYNUCLEOTIDYL TRANSFERASE, RIBONUCLEASE H-LIKE SUPERFAMILY PROTEIN"/>
    <property type="match status" value="1"/>
</dbReference>
<dbReference type="PANTHER" id="PTHR33317:SF4">
    <property type="entry name" value="POLYNUCLEOTIDYL TRANSFERASE, RIBONUCLEASE H-LIKE SUPERFAMILY PROTEIN"/>
    <property type="match status" value="1"/>
</dbReference>
<dbReference type="Pfam" id="PF03652">
    <property type="entry name" value="RuvX"/>
    <property type="match status" value="1"/>
</dbReference>
<dbReference type="SMART" id="SM00732">
    <property type="entry name" value="YqgFc"/>
    <property type="match status" value="1"/>
</dbReference>
<dbReference type="SUPFAM" id="SSF53098">
    <property type="entry name" value="Ribonuclease H-like"/>
    <property type="match status" value="1"/>
</dbReference>
<evidence type="ECO:0000255" key="1">
    <source>
        <dbReference type="HAMAP-Rule" id="MF_00651"/>
    </source>
</evidence>
<protein>
    <recommendedName>
        <fullName evidence="1">Putative pre-16S rRNA nuclease</fullName>
        <ecNumber evidence="1">3.1.-.-</ecNumber>
    </recommendedName>
</protein>
<feature type="chain" id="PRO_1000082740" description="Putative pre-16S rRNA nuclease">
    <location>
        <begin position="1"/>
        <end position="138"/>
    </location>
</feature>
<sequence length="138" mass="15288">MRILGLDLGSKTIGVAVSDPLGFTAQGLTTVRRTNKEKDIAEIKKFCDEYDAKVIVIGLPKNMNGTIGPSGEIAMAFGKVIEEELNVEVKFWDERLTTVAAHKAMLEADLSRNKRKKIVDKVASTYILQGYLDMISRK</sequence>
<organism>
    <name type="scientific">Clostridium beijerinckii (strain ATCC 51743 / NCIMB 8052)</name>
    <name type="common">Clostridium acetobutylicum</name>
    <dbReference type="NCBI Taxonomy" id="290402"/>
    <lineage>
        <taxon>Bacteria</taxon>
        <taxon>Bacillati</taxon>
        <taxon>Bacillota</taxon>
        <taxon>Clostridia</taxon>
        <taxon>Eubacteriales</taxon>
        <taxon>Clostridiaceae</taxon>
        <taxon>Clostridium</taxon>
    </lineage>
</organism>
<gene>
    <name type="ordered locus">Cbei_1106</name>
</gene>